<evidence type="ECO:0000255" key="1">
    <source>
        <dbReference type="HAMAP-Rule" id="MF_01187"/>
    </source>
</evidence>
<organism>
    <name type="scientific">Hamiltonella defensa subsp. Acyrthosiphon pisum (strain 5AT)</name>
    <dbReference type="NCBI Taxonomy" id="572265"/>
    <lineage>
        <taxon>Bacteria</taxon>
        <taxon>Pseudomonadati</taxon>
        <taxon>Pseudomonadota</taxon>
        <taxon>Gammaproteobacteria</taxon>
        <taxon>Enterobacterales</taxon>
        <taxon>Enterobacteriaceae</taxon>
        <taxon>aphid secondary symbionts</taxon>
        <taxon>Candidatus Hamiltonella</taxon>
    </lineage>
</organism>
<reference key="1">
    <citation type="journal article" date="2009" name="Proc. Natl. Acad. Sci. U.S.A.">
        <title>Hamiltonella defensa, genome evolution of protective bacterial endosymbiont from pathogenic ancestors.</title>
        <authorList>
            <person name="Degnan P.H."/>
            <person name="Yu Y."/>
            <person name="Sisneros N."/>
            <person name="Wing R.A."/>
            <person name="Moran N.A."/>
        </authorList>
    </citation>
    <scope>NUCLEOTIDE SEQUENCE [LARGE SCALE GENOMIC DNA]</scope>
    <source>
        <strain>5AT</strain>
    </source>
</reference>
<protein>
    <recommendedName>
        <fullName evidence="1">UPF0434 protein HDEF_0234</fullName>
    </recommendedName>
</protein>
<sequence>MDHHLLEIIACPICNGKLHFDKKNLELICQTDELAYPISNGIPVLLESHARDLSSLEKK</sequence>
<feature type="chain" id="PRO_1000213783" description="UPF0434 protein HDEF_0234">
    <location>
        <begin position="1"/>
        <end position="59"/>
    </location>
</feature>
<comment type="similarity">
    <text evidence="1">Belongs to the UPF0434 family.</text>
</comment>
<name>Y234_HAMD5</name>
<gene>
    <name type="ordered locus">HDEF_0234</name>
</gene>
<dbReference type="EMBL" id="CP001277">
    <property type="protein sequence ID" value="ACQ67002.1"/>
    <property type="molecule type" value="Genomic_DNA"/>
</dbReference>
<dbReference type="RefSeq" id="WP_012737967.1">
    <property type="nucleotide sequence ID" value="NC_012751.1"/>
</dbReference>
<dbReference type="SMR" id="C4K359"/>
<dbReference type="STRING" id="572265.HDEF_0234"/>
<dbReference type="GeneID" id="66260158"/>
<dbReference type="KEGG" id="hde:HDEF_0234"/>
<dbReference type="eggNOG" id="COG2835">
    <property type="taxonomic scope" value="Bacteria"/>
</dbReference>
<dbReference type="HOGENOM" id="CLU_155659_3_1_6"/>
<dbReference type="Proteomes" id="UP000002334">
    <property type="component" value="Chromosome"/>
</dbReference>
<dbReference type="GO" id="GO:0005829">
    <property type="term" value="C:cytosol"/>
    <property type="evidence" value="ECO:0007669"/>
    <property type="project" value="TreeGrafter"/>
</dbReference>
<dbReference type="FunFam" id="2.20.25.10:FF:000002">
    <property type="entry name" value="UPF0434 protein YcaR"/>
    <property type="match status" value="1"/>
</dbReference>
<dbReference type="Gene3D" id="2.20.25.10">
    <property type="match status" value="1"/>
</dbReference>
<dbReference type="HAMAP" id="MF_01187">
    <property type="entry name" value="UPF0434"/>
    <property type="match status" value="1"/>
</dbReference>
<dbReference type="InterPro" id="IPR005651">
    <property type="entry name" value="Trm112-like"/>
</dbReference>
<dbReference type="PANTHER" id="PTHR33505:SF4">
    <property type="entry name" value="PROTEIN PREY, MITOCHONDRIAL"/>
    <property type="match status" value="1"/>
</dbReference>
<dbReference type="PANTHER" id="PTHR33505">
    <property type="entry name" value="ZGC:162634"/>
    <property type="match status" value="1"/>
</dbReference>
<dbReference type="Pfam" id="PF03966">
    <property type="entry name" value="Trm112p"/>
    <property type="match status" value="1"/>
</dbReference>
<dbReference type="SUPFAM" id="SSF158997">
    <property type="entry name" value="Trm112p-like"/>
    <property type="match status" value="1"/>
</dbReference>
<proteinExistence type="inferred from homology"/>
<accession>C4K359</accession>